<feature type="chain" id="PRO_1000145282" description="ATP synthase subunit a">
    <location>
        <begin position="1"/>
        <end position="236"/>
    </location>
</feature>
<feature type="transmembrane region" description="Helical" evidence="1">
    <location>
        <begin position="17"/>
        <end position="37"/>
    </location>
</feature>
<feature type="transmembrane region" description="Helical" evidence="1">
    <location>
        <begin position="76"/>
        <end position="96"/>
    </location>
</feature>
<feature type="transmembrane region" description="Helical" evidence="1">
    <location>
        <begin position="113"/>
        <end position="133"/>
    </location>
</feature>
<feature type="transmembrane region" description="Helical" evidence="1">
    <location>
        <begin position="170"/>
        <end position="190"/>
    </location>
</feature>
<feature type="transmembrane region" description="Helical" evidence="1">
    <location>
        <begin position="196"/>
        <end position="216"/>
    </location>
</feature>
<comment type="function">
    <text evidence="1">Key component of the proton channel; it plays a direct role in the translocation of protons across the membrane.</text>
</comment>
<comment type="subunit">
    <text evidence="1">F-type ATPases have 2 components, CF(1) - the catalytic core - and CF(0) - the membrane proton channel. CF(1) has five subunits: alpha(3), beta(3), gamma(1), delta(1), epsilon(1). CF(0) has three main subunits: a(1), b(2) and c(9-12). The alpha and beta chains form an alternating ring which encloses part of the gamma chain. CF(1) is attached to CF(0) by a central stalk formed by the gamma and epsilon chains, while a peripheral stalk is formed by the delta and b chains.</text>
</comment>
<comment type="subcellular location">
    <subcellularLocation>
        <location evidence="1">Cell membrane</location>
        <topology evidence="1">Multi-pass membrane protein</topology>
    </subcellularLocation>
</comment>
<comment type="similarity">
    <text evidence="1">Belongs to the ATPase A chain family.</text>
</comment>
<organism>
    <name type="scientific">Limosilactobacillus fermentum (strain NBRC 3956 / LMG 18251)</name>
    <name type="common">Lactobacillus fermentum</name>
    <dbReference type="NCBI Taxonomy" id="334390"/>
    <lineage>
        <taxon>Bacteria</taxon>
        <taxon>Bacillati</taxon>
        <taxon>Bacillota</taxon>
        <taxon>Bacilli</taxon>
        <taxon>Lactobacillales</taxon>
        <taxon>Lactobacillaceae</taxon>
        <taxon>Limosilactobacillus</taxon>
    </lineage>
</organism>
<evidence type="ECO:0000255" key="1">
    <source>
        <dbReference type="HAMAP-Rule" id="MF_01393"/>
    </source>
</evidence>
<keyword id="KW-0066">ATP synthesis</keyword>
<keyword id="KW-1003">Cell membrane</keyword>
<keyword id="KW-0138">CF(0)</keyword>
<keyword id="KW-0375">Hydrogen ion transport</keyword>
<keyword id="KW-0406">Ion transport</keyword>
<keyword id="KW-0472">Membrane</keyword>
<keyword id="KW-1185">Reference proteome</keyword>
<keyword id="KW-0812">Transmembrane</keyword>
<keyword id="KW-1133">Transmembrane helix</keyword>
<keyword id="KW-0813">Transport</keyword>
<protein>
    <recommendedName>
        <fullName evidence="1">ATP synthase subunit a</fullName>
    </recommendedName>
    <alternativeName>
        <fullName evidence="1">ATP synthase F0 sector subunit a</fullName>
    </alternativeName>
    <alternativeName>
        <fullName evidence="1">F-ATPase subunit 6</fullName>
    </alternativeName>
</protein>
<name>ATP6_LIMF3</name>
<sequence length="236" mass="26271">MGGDAFTFELFGLTFNWTNLISGTIVFVITFFLLFGLSRHLQMKPTGGQNVLEWIVEFTNGIVRGQMPSETSGFYSFFVFVLFVFLFISNQLGLIIQFGWNGHEIVKSPTADPVVTMTLALCAVTLSHFAGVARQGVKGYFADYFKPFSLMFPIKLVEEFSNFLTLGLRIFGNIYAGELLLKLLAGMAFSHGIPTMIVSLPLEIIWQGFSVFIGAIQAYVFVTLTTVYISRKVTGE</sequence>
<dbReference type="EMBL" id="AP008937">
    <property type="protein sequence ID" value="BAG26771.1"/>
    <property type="molecule type" value="Genomic_DNA"/>
</dbReference>
<dbReference type="RefSeq" id="WP_003682740.1">
    <property type="nucleotide sequence ID" value="NC_010610.1"/>
</dbReference>
<dbReference type="SMR" id="B2GAT9"/>
<dbReference type="GeneID" id="83715237"/>
<dbReference type="KEGG" id="lfe:LAF_0435"/>
<dbReference type="eggNOG" id="COG0356">
    <property type="taxonomic scope" value="Bacteria"/>
</dbReference>
<dbReference type="HOGENOM" id="CLU_041018_2_3_9"/>
<dbReference type="Proteomes" id="UP000001697">
    <property type="component" value="Chromosome"/>
</dbReference>
<dbReference type="GO" id="GO:0005886">
    <property type="term" value="C:plasma membrane"/>
    <property type="evidence" value="ECO:0007669"/>
    <property type="project" value="UniProtKB-SubCell"/>
</dbReference>
<dbReference type="GO" id="GO:0045259">
    <property type="term" value="C:proton-transporting ATP synthase complex"/>
    <property type="evidence" value="ECO:0007669"/>
    <property type="project" value="UniProtKB-KW"/>
</dbReference>
<dbReference type="GO" id="GO:0046933">
    <property type="term" value="F:proton-transporting ATP synthase activity, rotational mechanism"/>
    <property type="evidence" value="ECO:0007669"/>
    <property type="project" value="UniProtKB-UniRule"/>
</dbReference>
<dbReference type="GO" id="GO:0042777">
    <property type="term" value="P:proton motive force-driven plasma membrane ATP synthesis"/>
    <property type="evidence" value="ECO:0007669"/>
    <property type="project" value="TreeGrafter"/>
</dbReference>
<dbReference type="CDD" id="cd00310">
    <property type="entry name" value="ATP-synt_Fo_a_6"/>
    <property type="match status" value="1"/>
</dbReference>
<dbReference type="Gene3D" id="1.20.120.220">
    <property type="entry name" value="ATP synthase, F0 complex, subunit A"/>
    <property type="match status" value="1"/>
</dbReference>
<dbReference type="HAMAP" id="MF_01393">
    <property type="entry name" value="ATP_synth_a_bact"/>
    <property type="match status" value="1"/>
</dbReference>
<dbReference type="InterPro" id="IPR045082">
    <property type="entry name" value="ATP_syn_F0_a_bact/chloroplast"/>
</dbReference>
<dbReference type="InterPro" id="IPR000568">
    <property type="entry name" value="ATP_synth_F0_asu"/>
</dbReference>
<dbReference type="InterPro" id="IPR035908">
    <property type="entry name" value="F0_ATP_A_sf"/>
</dbReference>
<dbReference type="NCBIfam" id="TIGR01131">
    <property type="entry name" value="ATP_synt_6_or_A"/>
    <property type="match status" value="1"/>
</dbReference>
<dbReference type="NCBIfam" id="NF004479">
    <property type="entry name" value="PRK05815.1-4"/>
    <property type="match status" value="1"/>
</dbReference>
<dbReference type="PANTHER" id="PTHR42823">
    <property type="entry name" value="ATP SYNTHASE SUBUNIT A, CHLOROPLASTIC"/>
    <property type="match status" value="1"/>
</dbReference>
<dbReference type="PANTHER" id="PTHR42823:SF3">
    <property type="entry name" value="ATP SYNTHASE SUBUNIT A, CHLOROPLASTIC"/>
    <property type="match status" value="1"/>
</dbReference>
<dbReference type="Pfam" id="PF00119">
    <property type="entry name" value="ATP-synt_A"/>
    <property type="match status" value="1"/>
</dbReference>
<dbReference type="PRINTS" id="PR00123">
    <property type="entry name" value="ATPASEA"/>
</dbReference>
<dbReference type="SUPFAM" id="SSF81336">
    <property type="entry name" value="F1F0 ATP synthase subunit A"/>
    <property type="match status" value="1"/>
</dbReference>
<proteinExistence type="inferred from homology"/>
<accession>B2GAT9</accession>
<reference key="1">
    <citation type="journal article" date="2008" name="DNA Res.">
        <title>Comparative genome analysis of Lactobacillus reuteri and Lactobacillus fermentum reveal a genomic island for reuterin and cobalamin production.</title>
        <authorList>
            <person name="Morita H."/>
            <person name="Toh H."/>
            <person name="Fukuda S."/>
            <person name="Horikawa H."/>
            <person name="Oshima K."/>
            <person name="Suzuki T."/>
            <person name="Murakami M."/>
            <person name="Hisamatsu S."/>
            <person name="Kato Y."/>
            <person name="Takizawa T."/>
            <person name="Fukuoka H."/>
            <person name="Yoshimura T."/>
            <person name="Itoh K."/>
            <person name="O'Sullivan D.J."/>
            <person name="McKay L.L."/>
            <person name="Ohno H."/>
            <person name="Kikuchi J."/>
            <person name="Masaoka T."/>
            <person name="Hattori M."/>
        </authorList>
    </citation>
    <scope>NUCLEOTIDE SEQUENCE [LARGE SCALE GENOMIC DNA]</scope>
    <source>
        <strain>NBRC 3956 / LMG 18251</strain>
    </source>
</reference>
<gene>
    <name evidence="1" type="primary">atpB</name>
    <name type="ordered locus">LAF_0435</name>
</gene>